<keyword id="KW-0325">Glycoprotein</keyword>
<keyword id="KW-0472">Membrane</keyword>
<keyword id="KW-0521">NADP</keyword>
<keyword id="KW-0560">Oxidoreductase</keyword>
<keyword id="KW-1185">Reference proteome</keyword>
<keyword id="KW-0812">Transmembrane</keyword>
<keyword id="KW-1133">Transmembrane helix</keyword>
<organism>
    <name type="scientific">Armillaria gallica</name>
    <name type="common">Bulbous honey fungus</name>
    <name type="synonym">Armillaria bulbosa</name>
    <dbReference type="NCBI Taxonomy" id="47427"/>
    <lineage>
        <taxon>Eukaryota</taxon>
        <taxon>Fungi</taxon>
        <taxon>Dikarya</taxon>
        <taxon>Basidiomycota</taxon>
        <taxon>Agaricomycotina</taxon>
        <taxon>Agaricomycetes</taxon>
        <taxon>Agaricomycetidae</taxon>
        <taxon>Agaricales</taxon>
        <taxon>Marasmiineae</taxon>
        <taxon>Physalacriaceae</taxon>
        <taxon>Armillaria</taxon>
    </lineage>
</organism>
<comment type="function">
    <text evidence="1 7 17">Short-chain dehydrogenase/reductase, part of the gene cluster that mediates the biosynthesis of melleolides, a range of antifungal and phytotoxic polyketide derivatives composed of an orsellinic acid (OA) moiety esterified to various sesquiterpene alcohols (Probable). The first step in melleolides biosynthesis is performed by the delta(6)-protoilludene synthase PRO1 which catalyzes the cyclization of farnesyl diphosphate to protoilludene (PubMed:21148562). The orsellinic acid synthase armB produces OA by condensing acetyl-CoA with 3 malonyl-CoA units in a three-round chain elongation reaction folowed by a C2-C7 ring closure (By similarity). ArmB further catalyzes the trans-esterification of OA to the various sesquiterpene alcohols resulting from the hydroxylation of protoilludene (By similarity). The melleolides cluster also includes 5 cytochrome P450 monooxygenases, 4 NAD(+)-dependent oxidoreductases, one flavin-dependent oxidoreductase, and one O-methyltransferase (By similarity). The cytochrome P450 monooxygenases may be involved in protoilludene hydroxylation to elaborate melleolides with multiple alcohol groups, such as melleolide D, which carries alcohol functionalities at C-4, C-5, C-10, and C-13 (By similarity). The role of the NAD(+)-dependent enzymes remains unknown (By similarity). Numerous melleolides, including arnamial, show 5'-O-methylation of the aromatic moiety which may be catalyzed by the methyltransferase encoded in the cluster (By similarity). The flavin-dependent oxidoreductase might represent the dehydrogenase yielding the aldehyde in position 1 of arnamial and other melleolides (By similarity). Finally, several halogenase localized outside of the cluster, are able to catalyze the transfer of a single chlorine atom to the melleolide backbone, resulting in a 6'-chloromelleolide product (By similarity).</text>
</comment>
<comment type="pathway">
    <text evidence="17">Secondary metabolite biosynthesis.</text>
</comment>
<comment type="subcellular location">
    <subcellularLocation>
        <location evidence="4">Membrane</location>
        <topology evidence="4">Multi-pass membrane protein</topology>
    </subcellularLocation>
</comment>
<comment type="biotechnology">
    <text evidence="8 9 10 11 12 14">Melleolide sesquiterpene aryl esters are cytotoxic secondary products with anti-cancer potential (PubMed:21376582, PubMed:26952552). Armillaridin shows therapeutic and radiosensitizing effects on human esophageal cancer cells (PubMed:23864890). Armillaridin induces autophagy-associated cell death in human chronic myelogenous leukemia as well as of hepatocellular carcinoma cells (PubMed:27592257, PubMed:31488037). Armillaridin can also inhibit the differentiation and activation of human macrophages and thus might have potential to be developed as a biological response modifier for inflammatory diseases (PubMed:25746621).</text>
</comment>
<comment type="miscellaneous">
    <text evidence="13 15 18">Armillaria species are both devastating forest pathogens and some of the largest and oldest terrestrial organisms on Earth (Probable) (PubMed:31746694). They forage for hosts and achieve immense colony sizes via rhizomorphs, root-like multicellular structures of clonal dispersal (Probable). One genetic Armillaria gallica individual localized in Michigan's Upper Peninsula stands out as exceptionally large, covering hundreds of tree root systems over approximately 75 hectares of the forest floor (PubMed:30963893). Based on observed growth rates of the fungus, the minimum age of this large individual can be estimated as 2500 years (PubMed:30963893).</text>
</comment>
<comment type="similarity">
    <text evidence="17">Belongs to the short-chain dehydrogenases/reductases (SDR) family.</text>
</comment>
<sequence>MGSSSRVGDENSLLDLTEKVAVVTGANSGIGLYILFHVARAGAKVYLGARTEAKFNSAITRLKTEGLDTSKVVWLPFDLSDPRKAKESAKWLLERENRLDILINNAAKILGPYAQTSDGLSDSMVINHMSPYLFTKTLLPLLESTARQPGSDVRIVNVSSVAHRWVPNPRYDSLEAFNNNFADTWKPKTNLYGYTKLANVLWTKELQRSFDRANIPILAMTVHPGNVMSEGNVKLFTSLMFGTIINWVFSLFFISPFDGGYTPAFAAASRVIAEDRRKYAGAYIVPFGVIEEASEDARREDLAKDLLATTDAVLKQYDYA</sequence>
<evidence type="ECO:0000250" key="1">
    <source>
        <dbReference type="UniProtKB" id="I3ZNU9"/>
    </source>
</evidence>
<evidence type="ECO:0000250" key="2">
    <source>
        <dbReference type="UniProtKB" id="L0E2Z4"/>
    </source>
</evidence>
<evidence type="ECO:0000250" key="3">
    <source>
        <dbReference type="UniProtKB" id="O93868"/>
    </source>
</evidence>
<evidence type="ECO:0000255" key="4"/>
<evidence type="ECO:0000255" key="5">
    <source>
        <dbReference type="PROSITE-ProRule" id="PRU00498"/>
    </source>
</evidence>
<evidence type="ECO:0000255" key="6">
    <source>
        <dbReference type="PROSITE-ProRule" id="PRU10001"/>
    </source>
</evidence>
<evidence type="ECO:0000269" key="7">
    <source>
    </source>
</evidence>
<evidence type="ECO:0000269" key="8">
    <source>
    </source>
</evidence>
<evidence type="ECO:0000269" key="9">
    <source>
    </source>
</evidence>
<evidence type="ECO:0000269" key="10">
    <source>
    </source>
</evidence>
<evidence type="ECO:0000269" key="11">
    <source>
    </source>
</evidence>
<evidence type="ECO:0000269" key="12">
    <source>
    </source>
</evidence>
<evidence type="ECO:0000269" key="13">
    <source>
    </source>
</evidence>
<evidence type="ECO:0000269" key="14">
    <source>
    </source>
</evidence>
<evidence type="ECO:0000269" key="15">
    <source>
    </source>
</evidence>
<evidence type="ECO:0000303" key="16">
    <source>
    </source>
</evidence>
<evidence type="ECO:0000305" key="17"/>
<evidence type="ECO:0000305" key="18">
    <source>
    </source>
</evidence>
<feature type="chain" id="PRO_0000449404" description="Short-chain dehydrogenase/reductase ARMGADRAFT_1169971">
    <location>
        <begin position="1"/>
        <end position="320"/>
    </location>
</feature>
<feature type="transmembrane region" description="Helical" evidence="4">
    <location>
        <begin position="19"/>
        <end position="39"/>
    </location>
</feature>
<feature type="transmembrane region" description="Helical" evidence="4">
    <location>
        <begin position="235"/>
        <end position="255"/>
    </location>
</feature>
<feature type="active site" description="Proton donor" evidence="3">
    <location>
        <position position="159"/>
    </location>
</feature>
<feature type="active site" description="Proton acceptor" evidence="6">
    <location>
        <position position="192"/>
    </location>
</feature>
<feature type="active site" description="Lowers pKa of active site Tyr" evidence="3">
    <location>
        <position position="196"/>
    </location>
</feature>
<feature type="binding site" evidence="2">
    <location>
        <position position="30"/>
    </location>
    <ligand>
        <name>NADP(+)</name>
        <dbReference type="ChEBI" id="CHEBI:58349"/>
    </ligand>
</feature>
<feature type="binding site" evidence="2">
    <location>
        <position position="78"/>
    </location>
    <ligand>
        <name>NADP(+)</name>
        <dbReference type="ChEBI" id="CHEBI:58349"/>
    </ligand>
</feature>
<feature type="binding site" evidence="3">
    <location>
        <position position="105"/>
    </location>
    <ligand>
        <name>NADP(+)</name>
        <dbReference type="ChEBI" id="CHEBI:58349"/>
    </ligand>
</feature>
<feature type="binding site" evidence="2">
    <location>
        <position position="136"/>
    </location>
    <ligand>
        <name>NADP(+)</name>
        <dbReference type="ChEBI" id="CHEBI:58349"/>
    </ligand>
</feature>
<feature type="binding site" evidence="3">
    <location>
        <position position="192"/>
    </location>
    <ligand>
        <name>NADP(+)</name>
        <dbReference type="ChEBI" id="CHEBI:58349"/>
    </ligand>
</feature>
<feature type="binding site" evidence="3">
    <location>
        <position position="196"/>
    </location>
    <ligand>
        <name>NADP(+)</name>
        <dbReference type="ChEBI" id="CHEBI:58349"/>
    </ligand>
</feature>
<feature type="binding site" evidence="3">
    <location>
        <position position="227"/>
    </location>
    <ligand>
        <name>NADP(+)</name>
        <dbReference type="ChEBI" id="CHEBI:58349"/>
    </ligand>
</feature>
<feature type="binding site" evidence="2">
    <location>
        <position position="229"/>
    </location>
    <ligand>
        <name>NADP(+)</name>
        <dbReference type="ChEBI" id="CHEBI:58349"/>
    </ligand>
</feature>
<feature type="glycosylation site" description="N-linked (GlcNAc...) asparagine" evidence="5">
    <location>
        <position position="157"/>
    </location>
</feature>
<gene>
    <name type="ORF">ARMGADRAFT_1169971</name>
</gene>
<accession>A0A2H3CZZ2</accession>
<dbReference type="EC" id="1.1.1.-" evidence="7"/>
<dbReference type="EMBL" id="KZ293696">
    <property type="protein sequence ID" value="PBK84762.1"/>
    <property type="molecule type" value="Genomic_DNA"/>
</dbReference>
<dbReference type="SMR" id="A0A2H3CZZ2"/>
<dbReference type="STRING" id="47427.A0A2H3CZZ2"/>
<dbReference type="InParanoid" id="A0A2H3CZZ2"/>
<dbReference type="OMA" id="SHEYLIL"/>
<dbReference type="OrthoDB" id="191139at2759"/>
<dbReference type="Proteomes" id="UP000217790">
    <property type="component" value="Unassembled WGS sequence"/>
</dbReference>
<dbReference type="GO" id="GO:0016020">
    <property type="term" value="C:membrane"/>
    <property type="evidence" value="ECO:0007669"/>
    <property type="project" value="UniProtKB-SubCell"/>
</dbReference>
<dbReference type="GO" id="GO:0016491">
    <property type="term" value="F:oxidoreductase activity"/>
    <property type="evidence" value="ECO:0007669"/>
    <property type="project" value="UniProtKB-KW"/>
</dbReference>
<dbReference type="Gene3D" id="3.40.50.720">
    <property type="entry name" value="NAD(P)-binding Rossmann-like Domain"/>
    <property type="match status" value="1"/>
</dbReference>
<dbReference type="InterPro" id="IPR036291">
    <property type="entry name" value="NAD(P)-bd_dom_sf"/>
</dbReference>
<dbReference type="InterPro" id="IPR002347">
    <property type="entry name" value="SDR_fam"/>
</dbReference>
<dbReference type="PANTHER" id="PTHR24320">
    <property type="entry name" value="RETINOL DEHYDROGENASE"/>
    <property type="match status" value="1"/>
</dbReference>
<dbReference type="PANTHER" id="PTHR24320:SF282">
    <property type="entry name" value="WW DOMAIN-CONTAINING OXIDOREDUCTASE"/>
    <property type="match status" value="1"/>
</dbReference>
<dbReference type="Pfam" id="PF00106">
    <property type="entry name" value="adh_short"/>
    <property type="match status" value="1"/>
</dbReference>
<dbReference type="PRINTS" id="PR00081">
    <property type="entry name" value="GDHRDH"/>
</dbReference>
<dbReference type="SUPFAM" id="SSF51735">
    <property type="entry name" value="NAD(P)-binding Rossmann-fold domains"/>
    <property type="match status" value="1"/>
</dbReference>
<reference key="1">
    <citation type="journal article" date="2017" name="Nat. Ecol. Evol.">
        <title>Genome expansion and lineage-specific genetic innovations in the forest pathogenic fungi Armillaria.</title>
        <authorList>
            <person name="Sipos G."/>
            <person name="Prasanna A.N."/>
            <person name="Walter M.C."/>
            <person name="O'Connor E."/>
            <person name="Balint B."/>
            <person name="Krizsan K."/>
            <person name="Kiss B."/>
            <person name="Hess J."/>
            <person name="Varga T."/>
            <person name="Slot J."/>
            <person name="Riley R."/>
            <person name="Boka B."/>
            <person name="Rigling D."/>
            <person name="Barry K."/>
            <person name="Lee J."/>
            <person name="Mihaltcheva S."/>
            <person name="LaButti K."/>
            <person name="Lipzen A."/>
            <person name="Waldron R."/>
            <person name="Moloney N.M."/>
            <person name="Sperisen C."/>
            <person name="Kredics L."/>
            <person name="Vagvoelgyi C."/>
            <person name="Patrignani A."/>
            <person name="Fitzpatrick D."/>
            <person name="Nagy I."/>
            <person name="Doyle S."/>
            <person name="Anderson J.B."/>
            <person name="Grigoriev I.V."/>
            <person name="Gueldener U."/>
            <person name="Muensterkoetter M."/>
            <person name="Nagy L.G."/>
        </authorList>
    </citation>
    <scope>NUCLEOTIDE SEQUENCE [LARGE SCALE GENOMIC DNA]</scope>
    <source>
        <strain>Ar21-2</strain>
    </source>
</reference>
<reference key="2">
    <citation type="journal article" date="2011" name="Bioorg. Med. Chem. Lett.">
        <title>In vitro cytotoxicity of melleolide antibiotics: structural and mechanistic aspects.</title>
        <authorList>
            <person name="Bohnert M."/>
            <person name="Miethbauer S."/>
            <person name="Dahse H.M."/>
            <person name="Ziemen J."/>
            <person name="Nett M."/>
            <person name="Hoffmeister D."/>
        </authorList>
    </citation>
    <scope>BIOTECHNOLOGY</scope>
</reference>
<reference key="3">
    <citation type="journal article" date="2011" name="J. Biol. Chem.">
        <title>Cloning and characterization of an Armillaria gallica cDNA encoding protoilludene synthase, which catalyzes the first committed step in the synthesis of antimicrobial melleolides.</title>
        <authorList>
            <person name="Engels B."/>
            <person name="Heinig U."/>
            <person name="Grothe T."/>
            <person name="Stadler M."/>
            <person name="Jennewein S."/>
        </authorList>
    </citation>
    <scope>FUNCTION</scope>
    <source>
        <strain>FU02472</strain>
    </source>
</reference>
<reference key="4">
    <citation type="journal article" date="2013" name="Evid. Based Complement Alternat. Med.">
        <title>Therapeutic and radiosensitizing effects of armillaridin on human esophageal cancer cells.</title>
        <authorList>
            <person name="Chi C.W."/>
            <person name="Chen C.C."/>
            <person name="Chen Y.J."/>
        </authorList>
    </citation>
    <scope>BIOTECHNOLOGY</scope>
</reference>
<reference key="5">
    <citation type="journal article" date="2015" name="Int. J. Med. Mushrooms">
        <title>Armillaridin, a honey medicinal mushroom, Armillaria mellea (higher basidiomycetes) component, inhibits differentiation and activation of human macrophages.</title>
        <authorList>
            <person name="Liu T.P."/>
            <person name="Chen C.C."/>
            <person name="Shiao P.Y."/>
            <person name="Shieh H.R."/>
            <person name="Chen Y.Y."/>
            <person name="Chen Y.J."/>
        </authorList>
    </citation>
    <scope>BIOTECHNOLOGY</scope>
</reference>
<reference key="6">
    <citation type="journal article" date="2016" name="J. Ethnopharmacol.">
        <title>Structure, cytotoxic activity and mechanism of protoilludane sesquiterpene aryl esters from the mycelium of Armillaria mellea.</title>
        <authorList>
            <person name="Li Z."/>
            <person name="Wang Y."/>
            <person name="Jiang B."/>
            <person name="Li W."/>
            <person name="Zheng L."/>
            <person name="Yang X."/>
            <person name="Bao Y."/>
            <person name="Sun L."/>
            <person name="Huang Y."/>
            <person name="Li Y."/>
        </authorList>
    </citation>
    <scope>BIOTECHNOLOGY</scope>
</reference>
<reference key="7">
    <citation type="journal article" date="2016" name="Tumor Biol.">
        <title>Armillaridin induces autophagy-associated cell death in human chronic myelogenous leukemia K562 cells.</title>
        <authorList>
            <person name="Chang W.H."/>
            <person name="Huang H.L."/>
            <person name="Huang W.P."/>
            <person name="Chen C.C."/>
            <person name="Chen Y.J."/>
        </authorList>
    </citation>
    <scope>BIOTECHNOLOGY</scope>
</reference>
<reference key="8">
    <citation type="journal article" date="2018" name="Curr. Biol.">
        <title>Armillaria.</title>
        <authorList>
            <person name="Sipos G."/>
            <person name="Anderson J.B."/>
            <person name="Nagy L.G."/>
        </authorList>
    </citation>
    <scope>MISCELLANEOUS</scope>
</reference>
<reference key="9">
    <citation type="journal article" date="2018" name="Proc. R. Soc. B">
        <title>Clonal evolution and genome stability in a 2500-year-old fungal individual.</title>
        <authorList>
            <person name="Anderson J.B."/>
            <person name="Bruhn J.N."/>
            <person name="Kasimer D."/>
            <person name="Wang H."/>
            <person name="Rodrigue N."/>
            <person name="Smith M.L."/>
        </authorList>
    </citation>
    <scope>MISCELLANEOUS</scope>
</reference>
<reference key="10">
    <citation type="journal article" date="2019" name="Am. J. Chin. Med.">
        <title>Induction of autophagic death of human hepatocellular carcinoma cells by armillaridin from Armillaria mellea.</title>
        <authorList>
            <person name="Leu Y.S."/>
            <person name="Chen Y.J."/>
            <person name="Chen C.C."/>
            <person name="Huang H.L."/>
        </authorList>
    </citation>
    <scope>BIOTECHNOLOGY</scope>
</reference>
<reference key="11">
    <citation type="journal article" date="2020" name="Plant Dis.">
        <title>Susceptibility of garden trees and shrubs to Armillaria root rot.</title>
        <authorList>
            <person name="Cromey M.G."/>
            <person name="Drakulic J."/>
            <person name="Beal E.J."/>
            <person name="Waghorn I.A.G."/>
            <person name="Perry J.N."/>
            <person name="Clover G.R.G."/>
        </authorList>
    </citation>
    <scope>MISCELLANEOUS</scope>
</reference>
<name>ARMD2_ARMGA</name>
<protein>
    <recommendedName>
        <fullName evidence="16">Short-chain dehydrogenase/reductase ARMGADRAFT_1169971</fullName>
        <ecNumber evidence="7">1.1.1.-</ecNumber>
    </recommendedName>
    <alternativeName>
        <fullName>Melleolides biosynthesis cluster protein ARMGADRAFT_1169971</fullName>
    </alternativeName>
</protein>
<proteinExistence type="evidence at protein level"/>